<gene>
    <name evidence="1" type="primary">mgsA</name>
    <name type="ordered locus">EcE24377A_1078</name>
</gene>
<evidence type="ECO:0000255" key="1">
    <source>
        <dbReference type="HAMAP-Rule" id="MF_00549"/>
    </source>
</evidence>
<reference key="1">
    <citation type="journal article" date="2008" name="J. Bacteriol.">
        <title>The pangenome structure of Escherichia coli: comparative genomic analysis of E. coli commensal and pathogenic isolates.</title>
        <authorList>
            <person name="Rasko D.A."/>
            <person name="Rosovitz M.J."/>
            <person name="Myers G.S.A."/>
            <person name="Mongodin E.F."/>
            <person name="Fricke W.F."/>
            <person name="Gajer P."/>
            <person name="Crabtree J."/>
            <person name="Sebaihia M."/>
            <person name="Thomson N.R."/>
            <person name="Chaudhuri R."/>
            <person name="Henderson I.R."/>
            <person name="Sperandio V."/>
            <person name="Ravel J."/>
        </authorList>
    </citation>
    <scope>NUCLEOTIDE SEQUENCE [LARGE SCALE GENOMIC DNA]</scope>
    <source>
        <strain>E24377A / ETEC</strain>
    </source>
</reference>
<name>MGSA_ECO24</name>
<protein>
    <recommendedName>
        <fullName evidence="1">Methylglyoxal synthase</fullName>
        <shortName evidence="1">MGS</shortName>
        <ecNumber evidence="1">4.2.3.3</ecNumber>
    </recommendedName>
</protein>
<comment type="function">
    <text evidence="1">Catalyzes the formation of methylglyoxal from dihydroxyacetone phosphate.</text>
</comment>
<comment type="catalytic activity">
    <reaction evidence="1">
        <text>dihydroxyacetone phosphate = methylglyoxal + phosphate</text>
        <dbReference type="Rhea" id="RHEA:17937"/>
        <dbReference type="ChEBI" id="CHEBI:17158"/>
        <dbReference type="ChEBI" id="CHEBI:43474"/>
        <dbReference type="ChEBI" id="CHEBI:57642"/>
        <dbReference type="EC" id="4.2.3.3"/>
    </reaction>
</comment>
<comment type="similarity">
    <text evidence="1">Belongs to the methylglyoxal synthase family.</text>
</comment>
<accession>A7ZK67</accession>
<sequence length="152" mass="16919">MELTTRTLPARKHIALVAHDHCKQMLMSWVERHQPLLEQHVLYATGTTGNLISRATGMNVNAMLSGPMGGDQQVGALISEGKIDVLIFFWDPLNAVPHDPDVKALLRLATVWNIPVATNVATADFIIQSPHFNDAVDILIPDYQRYLADRLK</sequence>
<dbReference type="EC" id="4.2.3.3" evidence="1"/>
<dbReference type="EMBL" id="CP000800">
    <property type="protein sequence ID" value="ABV18220.1"/>
    <property type="molecule type" value="Genomic_DNA"/>
</dbReference>
<dbReference type="RefSeq" id="WP_000424181.1">
    <property type="nucleotide sequence ID" value="NC_009801.1"/>
</dbReference>
<dbReference type="SMR" id="A7ZK67"/>
<dbReference type="GeneID" id="93776451"/>
<dbReference type="KEGG" id="ecw:EcE24377A_1078"/>
<dbReference type="HOGENOM" id="CLU_120420_0_1_6"/>
<dbReference type="Proteomes" id="UP000001122">
    <property type="component" value="Chromosome"/>
</dbReference>
<dbReference type="GO" id="GO:0005829">
    <property type="term" value="C:cytosol"/>
    <property type="evidence" value="ECO:0007669"/>
    <property type="project" value="TreeGrafter"/>
</dbReference>
<dbReference type="GO" id="GO:0008929">
    <property type="term" value="F:methylglyoxal synthase activity"/>
    <property type="evidence" value="ECO:0007669"/>
    <property type="project" value="UniProtKB-UniRule"/>
</dbReference>
<dbReference type="GO" id="GO:0019242">
    <property type="term" value="P:methylglyoxal biosynthetic process"/>
    <property type="evidence" value="ECO:0007669"/>
    <property type="project" value="UniProtKB-UniRule"/>
</dbReference>
<dbReference type="CDD" id="cd01422">
    <property type="entry name" value="MGS"/>
    <property type="match status" value="1"/>
</dbReference>
<dbReference type="FunFam" id="3.40.50.1380:FF:000002">
    <property type="entry name" value="Methylglyoxal synthase"/>
    <property type="match status" value="1"/>
</dbReference>
<dbReference type="Gene3D" id="3.40.50.1380">
    <property type="entry name" value="Methylglyoxal synthase-like domain"/>
    <property type="match status" value="1"/>
</dbReference>
<dbReference type="HAMAP" id="MF_00549">
    <property type="entry name" value="Methylglyoxal_synth"/>
    <property type="match status" value="1"/>
</dbReference>
<dbReference type="InterPro" id="IPR004363">
    <property type="entry name" value="Methylgl_synth"/>
</dbReference>
<dbReference type="InterPro" id="IPR018148">
    <property type="entry name" value="Methylglyoxal_synth_AS"/>
</dbReference>
<dbReference type="InterPro" id="IPR011607">
    <property type="entry name" value="MGS-like_dom"/>
</dbReference>
<dbReference type="InterPro" id="IPR036914">
    <property type="entry name" value="MGS-like_dom_sf"/>
</dbReference>
<dbReference type="NCBIfam" id="TIGR00160">
    <property type="entry name" value="MGSA"/>
    <property type="match status" value="1"/>
</dbReference>
<dbReference type="NCBIfam" id="NF003559">
    <property type="entry name" value="PRK05234.1"/>
    <property type="match status" value="1"/>
</dbReference>
<dbReference type="PANTHER" id="PTHR30492">
    <property type="entry name" value="METHYLGLYOXAL SYNTHASE"/>
    <property type="match status" value="1"/>
</dbReference>
<dbReference type="PANTHER" id="PTHR30492:SF0">
    <property type="entry name" value="METHYLGLYOXAL SYNTHASE"/>
    <property type="match status" value="1"/>
</dbReference>
<dbReference type="Pfam" id="PF02142">
    <property type="entry name" value="MGS"/>
    <property type="match status" value="1"/>
</dbReference>
<dbReference type="PIRSF" id="PIRSF006614">
    <property type="entry name" value="Methylglyox_syn"/>
    <property type="match status" value="1"/>
</dbReference>
<dbReference type="SMART" id="SM00851">
    <property type="entry name" value="MGS"/>
    <property type="match status" value="1"/>
</dbReference>
<dbReference type="SUPFAM" id="SSF52335">
    <property type="entry name" value="Methylglyoxal synthase-like"/>
    <property type="match status" value="1"/>
</dbReference>
<dbReference type="PROSITE" id="PS01335">
    <property type="entry name" value="METHYLGLYOXAL_SYNTH"/>
    <property type="match status" value="1"/>
</dbReference>
<dbReference type="PROSITE" id="PS51855">
    <property type="entry name" value="MGS"/>
    <property type="match status" value="1"/>
</dbReference>
<feature type="chain" id="PRO_1000061087" description="Methylglyoxal synthase">
    <location>
        <begin position="1"/>
        <end position="152"/>
    </location>
</feature>
<feature type="domain" description="MGS-like" evidence="1">
    <location>
        <begin position="6"/>
        <end position="152"/>
    </location>
</feature>
<feature type="active site" description="Proton donor/acceptor" evidence="1">
    <location>
        <position position="71"/>
    </location>
</feature>
<feature type="binding site" evidence="1">
    <location>
        <position position="19"/>
    </location>
    <ligand>
        <name>substrate</name>
    </ligand>
</feature>
<feature type="binding site" evidence="1">
    <location>
        <position position="23"/>
    </location>
    <ligand>
        <name>substrate</name>
    </ligand>
</feature>
<feature type="binding site" evidence="1">
    <location>
        <begin position="45"/>
        <end position="48"/>
    </location>
    <ligand>
        <name>substrate</name>
    </ligand>
</feature>
<feature type="binding site" evidence="1">
    <location>
        <begin position="65"/>
        <end position="66"/>
    </location>
    <ligand>
        <name>substrate</name>
    </ligand>
</feature>
<feature type="binding site" evidence="1">
    <location>
        <position position="98"/>
    </location>
    <ligand>
        <name>substrate</name>
    </ligand>
</feature>
<organism>
    <name type="scientific">Escherichia coli O139:H28 (strain E24377A / ETEC)</name>
    <dbReference type="NCBI Taxonomy" id="331111"/>
    <lineage>
        <taxon>Bacteria</taxon>
        <taxon>Pseudomonadati</taxon>
        <taxon>Pseudomonadota</taxon>
        <taxon>Gammaproteobacteria</taxon>
        <taxon>Enterobacterales</taxon>
        <taxon>Enterobacteriaceae</taxon>
        <taxon>Escherichia</taxon>
    </lineage>
</organism>
<proteinExistence type="inferred from homology"/>
<keyword id="KW-0456">Lyase</keyword>
<keyword id="KW-1185">Reference proteome</keyword>